<accession>C1DKK8</accession>
<protein>
    <recommendedName>
        <fullName evidence="1">Small ribosomal subunit protein uS7</fullName>
    </recommendedName>
    <alternativeName>
        <fullName evidence="2">30S ribosomal protein S7</fullName>
    </alternativeName>
</protein>
<feature type="chain" id="PRO_1000206393" description="Small ribosomal subunit protein uS7">
    <location>
        <begin position="1"/>
        <end position="156"/>
    </location>
</feature>
<proteinExistence type="inferred from homology"/>
<evidence type="ECO:0000255" key="1">
    <source>
        <dbReference type="HAMAP-Rule" id="MF_00480"/>
    </source>
</evidence>
<evidence type="ECO:0000305" key="2"/>
<organism>
    <name type="scientific">Azotobacter vinelandii (strain DJ / ATCC BAA-1303)</name>
    <dbReference type="NCBI Taxonomy" id="322710"/>
    <lineage>
        <taxon>Bacteria</taxon>
        <taxon>Pseudomonadati</taxon>
        <taxon>Pseudomonadota</taxon>
        <taxon>Gammaproteobacteria</taxon>
        <taxon>Pseudomonadales</taxon>
        <taxon>Pseudomonadaceae</taxon>
        <taxon>Azotobacter</taxon>
    </lineage>
</organism>
<name>RS7_AZOVD</name>
<comment type="function">
    <text evidence="1">One of the primary rRNA binding proteins, it binds directly to 16S rRNA where it nucleates assembly of the head domain of the 30S subunit. Is located at the subunit interface close to the decoding center, probably blocks exit of the E-site tRNA.</text>
</comment>
<comment type="subunit">
    <text evidence="1">Part of the 30S ribosomal subunit. Contacts proteins S9 and S11.</text>
</comment>
<comment type="similarity">
    <text evidence="1">Belongs to the universal ribosomal protein uS7 family.</text>
</comment>
<sequence>MPRRRVAAKREILDDPKYGSQILAKFMNHVMESGKKAVAERIVYGALDTVKSRKNSDPLEIFEKALDAIAPLVEVKSRRVGGATYQVPVEVRPSRRNALAMRWLVDSARKRGEKSMALRLAGELLDASEGKGAAVKKREDVHRMAEANKAFSHYRF</sequence>
<reference key="1">
    <citation type="journal article" date="2009" name="J. Bacteriol.">
        <title>Genome sequence of Azotobacter vinelandii, an obligate aerobe specialized to support diverse anaerobic metabolic processes.</title>
        <authorList>
            <person name="Setubal J.C."/>
            <person name="Dos Santos P."/>
            <person name="Goldman B.S."/>
            <person name="Ertesvaag H."/>
            <person name="Espin G."/>
            <person name="Rubio L.M."/>
            <person name="Valla S."/>
            <person name="Almeida N.F."/>
            <person name="Balasubramanian D."/>
            <person name="Cromes L."/>
            <person name="Curatti L."/>
            <person name="Du Z."/>
            <person name="Godsy E."/>
            <person name="Goodner B."/>
            <person name="Hellner-Burris K."/>
            <person name="Hernandez J.A."/>
            <person name="Houmiel K."/>
            <person name="Imperial J."/>
            <person name="Kennedy C."/>
            <person name="Larson T.J."/>
            <person name="Latreille P."/>
            <person name="Ligon L.S."/>
            <person name="Lu J."/>
            <person name="Maerk M."/>
            <person name="Miller N.M."/>
            <person name="Norton S."/>
            <person name="O'Carroll I.P."/>
            <person name="Paulsen I."/>
            <person name="Raulfs E.C."/>
            <person name="Roemer R."/>
            <person name="Rosser J."/>
            <person name="Segura D."/>
            <person name="Slater S."/>
            <person name="Stricklin S.L."/>
            <person name="Studholme D.J."/>
            <person name="Sun J."/>
            <person name="Viana C.J."/>
            <person name="Wallin E."/>
            <person name="Wang B."/>
            <person name="Wheeler C."/>
            <person name="Zhu H."/>
            <person name="Dean D.R."/>
            <person name="Dixon R."/>
            <person name="Wood D."/>
        </authorList>
    </citation>
    <scope>NUCLEOTIDE SEQUENCE [LARGE SCALE GENOMIC DNA]</scope>
    <source>
        <strain>DJ / ATCC BAA-1303</strain>
    </source>
</reference>
<dbReference type="EMBL" id="CP001157">
    <property type="protein sequence ID" value="ACO76871.1"/>
    <property type="molecule type" value="Genomic_DNA"/>
</dbReference>
<dbReference type="RefSeq" id="WP_012699299.1">
    <property type="nucleotide sequence ID" value="NZ_CP144736.1"/>
</dbReference>
<dbReference type="SMR" id="C1DKK8"/>
<dbReference type="STRING" id="322710.Avin_06200"/>
<dbReference type="EnsemblBacteria" id="ACO76871">
    <property type="protein sequence ID" value="ACO76871"/>
    <property type="gene ID" value="Avin_06200"/>
</dbReference>
<dbReference type="GeneID" id="88184032"/>
<dbReference type="KEGG" id="avn:Avin_06200"/>
<dbReference type="eggNOG" id="COG0049">
    <property type="taxonomic scope" value="Bacteria"/>
</dbReference>
<dbReference type="HOGENOM" id="CLU_072226_1_1_6"/>
<dbReference type="OrthoDB" id="9807653at2"/>
<dbReference type="Proteomes" id="UP000002424">
    <property type="component" value="Chromosome"/>
</dbReference>
<dbReference type="GO" id="GO:0015935">
    <property type="term" value="C:small ribosomal subunit"/>
    <property type="evidence" value="ECO:0007669"/>
    <property type="project" value="InterPro"/>
</dbReference>
<dbReference type="GO" id="GO:0019843">
    <property type="term" value="F:rRNA binding"/>
    <property type="evidence" value="ECO:0007669"/>
    <property type="project" value="UniProtKB-UniRule"/>
</dbReference>
<dbReference type="GO" id="GO:0003735">
    <property type="term" value="F:structural constituent of ribosome"/>
    <property type="evidence" value="ECO:0007669"/>
    <property type="project" value="InterPro"/>
</dbReference>
<dbReference type="GO" id="GO:0000049">
    <property type="term" value="F:tRNA binding"/>
    <property type="evidence" value="ECO:0007669"/>
    <property type="project" value="UniProtKB-UniRule"/>
</dbReference>
<dbReference type="GO" id="GO:0006412">
    <property type="term" value="P:translation"/>
    <property type="evidence" value="ECO:0007669"/>
    <property type="project" value="UniProtKB-UniRule"/>
</dbReference>
<dbReference type="CDD" id="cd14869">
    <property type="entry name" value="uS7_Bacteria"/>
    <property type="match status" value="1"/>
</dbReference>
<dbReference type="FunFam" id="1.10.455.10:FF:000001">
    <property type="entry name" value="30S ribosomal protein S7"/>
    <property type="match status" value="1"/>
</dbReference>
<dbReference type="Gene3D" id="1.10.455.10">
    <property type="entry name" value="Ribosomal protein S7 domain"/>
    <property type="match status" value="1"/>
</dbReference>
<dbReference type="HAMAP" id="MF_00480_B">
    <property type="entry name" value="Ribosomal_uS7_B"/>
    <property type="match status" value="1"/>
</dbReference>
<dbReference type="InterPro" id="IPR000235">
    <property type="entry name" value="Ribosomal_uS7"/>
</dbReference>
<dbReference type="InterPro" id="IPR005717">
    <property type="entry name" value="Ribosomal_uS7_bac/org-type"/>
</dbReference>
<dbReference type="InterPro" id="IPR020606">
    <property type="entry name" value="Ribosomal_uS7_CS"/>
</dbReference>
<dbReference type="InterPro" id="IPR023798">
    <property type="entry name" value="Ribosomal_uS7_dom"/>
</dbReference>
<dbReference type="InterPro" id="IPR036823">
    <property type="entry name" value="Ribosomal_uS7_dom_sf"/>
</dbReference>
<dbReference type="NCBIfam" id="TIGR01029">
    <property type="entry name" value="rpsG_bact"/>
    <property type="match status" value="1"/>
</dbReference>
<dbReference type="PANTHER" id="PTHR11205">
    <property type="entry name" value="RIBOSOMAL PROTEIN S7"/>
    <property type="match status" value="1"/>
</dbReference>
<dbReference type="Pfam" id="PF00177">
    <property type="entry name" value="Ribosomal_S7"/>
    <property type="match status" value="1"/>
</dbReference>
<dbReference type="PIRSF" id="PIRSF002122">
    <property type="entry name" value="RPS7p_RPS7a_RPS5e_RPS7o"/>
    <property type="match status" value="1"/>
</dbReference>
<dbReference type="SUPFAM" id="SSF47973">
    <property type="entry name" value="Ribosomal protein S7"/>
    <property type="match status" value="1"/>
</dbReference>
<dbReference type="PROSITE" id="PS00052">
    <property type="entry name" value="RIBOSOMAL_S7"/>
    <property type="match status" value="1"/>
</dbReference>
<keyword id="KW-0687">Ribonucleoprotein</keyword>
<keyword id="KW-0689">Ribosomal protein</keyword>
<keyword id="KW-0694">RNA-binding</keyword>
<keyword id="KW-0699">rRNA-binding</keyword>
<keyword id="KW-0820">tRNA-binding</keyword>
<gene>
    <name evidence="1" type="primary">rpsG</name>
    <name type="ordered locus">Avin_06200</name>
</gene>